<organism>
    <name type="scientific">Dinoroseobacter shibae (strain DSM 16493 / NCIMB 14021 / DFL 12)</name>
    <dbReference type="NCBI Taxonomy" id="398580"/>
    <lineage>
        <taxon>Bacteria</taxon>
        <taxon>Pseudomonadati</taxon>
        <taxon>Pseudomonadota</taxon>
        <taxon>Alphaproteobacteria</taxon>
        <taxon>Rhodobacterales</taxon>
        <taxon>Roseobacteraceae</taxon>
        <taxon>Dinoroseobacter</taxon>
    </lineage>
</organism>
<keyword id="KW-1185">Reference proteome</keyword>
<keyword id="KW-0687">Ribonucleoprotein</keyword>
<keyword id="KW-0689">Ribosomal protein</keyword>
<keyword id="KW-0694">RNA-binding</keyword>
<keyword id="KW-0699">rRNA-binding</keyword>
<feature type="chain" id="PRO_1000086328" description="Large ribosomal subunit protein uL2">
    <location>
        <begin position="1"/>
        <end position="280"/>
    </location>
</feature>
<feature type="region of interest" description="Disordered" evidence="2">
    <location>
        <begin position="223"/>
        <end position="280"/>
    </location>
</feature>
<feature type="compositionally biased region" description="Basic residues" evidence="2">
    <location>
        <begin position="254"/>
        <end position="280"/>
    </location>
</feature>
<proteinExistence type="inferred from homology"/>
<reference key="1">
    <citation type="journal article" date="2010" name="ISME J.">
        <title>The complete genome sequence of the algal symbiont Dinoroseobacter shibae: a hitchhiker's guide to life in the sea.</title>
        <authorList>
            <person name="Wagner-Dobler I."/>
            <person name="Ballhausen B."/>
            <person name="Berger M."/>
            <person name="Brinkhoff T."/>
            <person name="Buchholz I."/>
            <person name="Bunk B."/>
            <person name="Cypionka H."/>
            <person name="Daniel R."/>
            <person name="Drepper T."/>
            <person name="Gerdts G."/>
            <person name="Hahnke S."/>
            <person name="Han C."/>
            <person name="Jahn D."/>
            <person name="Kalhoefer D."/>
            <person name="Kiss H."/>
            <person name="Klenk H.P."/>
            <person name="Kyrpides N."/>
            <person name="Liebl W."/>
            <person name="Liesegang H."/>
            <person name="Meincke L."/>
            <person name="Pati A."/>
            <person name="Petersen J."/>
            <person name="Piekarski T."/>
            <person name="Pommerenke C."/>
            <person name="Pradella S."/>
            <person name="Pukall R."/>
            <person name="Rabus R."/>
            <person name="Stackebrandt E."/>
            <person name="Thole S."/>
            <person name="Thompson L."/>
            <person name="Tielen P."/>
            <person name="Tomasch J."/>
            <person name="von Jan M."/>
            <person name="Wanphrut N."/>
            <person name="Wichels A."/>
            <person name="Zech H."/>
            <person name="Simon M."/>
        </authorList>
    </citation>
    <scope>NUCLEOTIDE SEQUENCE [LARGE SCALE GENOMIC DNA]</scope>
    <source>
        <strain>DSM 16493 / NCIMB 14021 / DFL 12</strain>
    </source>
</reference>
<protein>
    <recommendedName>
        <fullName evidence="1">Large ribosomal subunit protein uL2</fullName>
    </recommendedName>
    <alternativeName>
        <fullName evidence="3">50S ribosomal protein L2</fullName>
    </alternativeName>
</protein>
<comment type="function">
    <text evidence="1">One of the primary rRNA binding proteins. Required for association of the 30S and 50S subunits to form the 70S ribosome, for tRNA binding and peptide bond formation. It has been suggested to have peptidyltransferase activity; this is somewhat controversial. Makes several contacts with the 16S rRNA in the 70S ribosome.</text>
</comment>
<comment type="subunit">
    <text evidence="1">Part of the 50S ribosomal subunit. Forms a bridge to the 30S subunit in the 70S ribosome.</text>
</comment>
<comment type="similarity">
    <text evidence="1">Belongs to the universal ribosomal protein uL2 family.</text>
</comment>
<evidence type="ECO:0000255" key="1">
    <source>
        <dbReference type="HAMAP-Rule" id="MF_01320"/>
    </source>
</evidence>
<evidence type="ECO:0000256" key="2">
    <source>
        <dbReference type="SAM" id="MobiDB-lite"/>
    </source>
</evidence>
<evidence type="ECO:0000305" key="3"/>
<accession>A8LM57</accession>
<gene>
    <name evidence="1" type="primary">rplB</name>
    <name type="ordered locus">Dshi_0285</name>
</gene>
<sequence length="280" mass="30480">MALKSYKPTTPGQRGLVLIDRSELWKGRPVKSLTEGLSKKGGRNNTGRITMRRRGGGAKRLYRIVDFKRRKFDVEGVITRIEYDPNRTAFIALVTYTDGEQAYILAPQRTAVGDKVVASQKADIKPGNAMPFSGMPIGTIVHNIELKPGKGGQIARAAGTYAQFVGRDGGYAQIRLSSGELRLVRQECMATVGAVSNPDNSNQNLGKAGRNRHKGIRPSVRGVVMNPVDHPHGGGEGRTSGGRHPVTPWGKPTKGARTRNKNKASSKLIIRSRHAKKKGR</sequence>
<dbReference type="EMBL" id="CP000830">
    <property type="protein sequence ID" value="ABV92034.1"/>
    <property type="molecule type" value="Genomic_DNA"/>
</dbReference>
<dbReference type="RefSeq" id="WP_012176965.1">
    <property type="nucleotide sequence ID" value="NC_009952.1"/>
</dbReference>
<dbReference type="SMR" id="A8LM57"/>
<dbReference type="STRING" id="398580.Dshi_0285"/>
<dbReference type="KEGG" id="dsh:Dshi_0285"/>
<dbReference type="eggNOG" id="COG0090">
    <property type="taxonomic scope" value="Bacteria"/>
</dbReference>
<dbReference type="HOGENOM" id="CLU_036235_2_1_5"/>
<dbReference type="OrthoDB" id="9778722at2"/>
<dbReference type="Proteomes" id="UP000006833">
    <property type="component" value="Chromosome"/>
</dbReference>
<dbReference type="GO" id="GO:0015934">
    <property type="term" value="C:large ribosomal subunit"/>
    <property type="evidence" value="ECO:0007669"/>
    <property type="project" value="InterPro"/>
</dbReference>
<dbReference type="GO" id="GO:0019843">
    <property type="term" value="F:rRNA binding"/>
    <property type="evidence" value="ECO:0007669"/>
    <property type="project" value="UniProtKB-UniRule"/>
</dbReference>
<dbReference type="GO" id="GO:0003735">
    <property type="term" value="F:structural constituent of ribosome"/>
    <property type="evidence" value="ECO:0007669"/>
    <property type="project" value="InterPro"/>
</dbReference>
<dbReference type="GO" id="GO:0016740">
    <property type="term" value="F:transferase activity"/>
    <property type="evidence" value="ECO:0007669"/>
    <property type="project" value="InterPro"/>
</dbReference>
<dbReference type="GO" id="GO:0002181">
    <property type="term" value="P:cytoplasmic translation"/>
    <property type="evidence" value="ECO:0007669"/>
    <property type="project" value="TreeGrafter"/>
</dbReference>
<dbReference type="FunFam" id="2.30.30.30:FF:000001">
    <property type="entry name" value="50S ribosomal protein L2"/>
    <property type="match status" value="1"/>
</dbReference>
<dbReference type="FunFam" id="2.40.50.140:FF:000003">
    <property type="entry name" value="50S ribosomal protein L2"/>
    <property type="match status" value="1"/>
</dbReference>
<dbReference type="FunFam" id="4.10.950.10:FF:000001">
    <property type="entry name" value="50S ribosomal protein L2"/>
    <property type="match status" value="1"/>
</dbReference>
<dbReference type="Gene3D" id="2.30.30.30">
    <property type="match status" value="1"/>
</dbReference>
<dbReference type="Gene3D" id="2.40.50.140">
    <property type="entry name" value="Nucleic acid-binding proteins"/>
    <property type="match status" value="1"/>
</dbReference>
<dbReference type="Gene3D" id="4.10.950.10">
    <property type="entry name" value="Ribosomal protein L2, domain 3"/>
    <property type="match status" value="1"/>
</dbReference>
<dbReference type="HAMAP" id="MF_01320_B">
    <property type="entry name" value="Ribosomal_uL2_B"/>
    <property type="match status" value="1"/>
</dbReference>
<dbReference type="InterPro" id="IPR012340">
    <property type="entry name" value="NA-bd_OB-fold"/>
</dbReference>
<dbReference type="InterPro" id="IPR014722">
    <property type="entry name" value="Rib_uL2_dom2"/>
</dbReference>
<dbReference type="InterPro" id="IPR002171">
    <property type="entry name" value="Ribosomal_uL2"/>
</dbReference>
<dbReference type="InterPro" id="IPR005880">
    <property type="entry name" value="Ribosomal_uL2_bac/org-type"/>
</dbReference>
<dbReference type="InterPro" id="IPR022669">
    <property type="entry name" value="Ribosomal_uL2_C"/>
</dbReference>
<dbReference type="InterPro" id="IPR022671">
    <property type="entry name" value="Ribosomal_uL2_CS"/>
</dbReference>
<dbReference type="InterPro" id="IPR014726">
    <property type="entry name" value="Ribosomal_uL2_dom3"/>
</dbReference>
<dbReference type="InterPro" id="IPR022666">
    <property type="entry name" value="Ribosomal_uL2_RNA-bd_dom"/>
</dbReference>
<dbReference type="InterPro" id="IPR008991">
    <property type="entry name" value="Translation_prot_SH3-like_sf"/>
</dbReference>
<dbReference type="NCBIfam" id="TIGR01171">
    <property type="entry name" value="rplB_bact"/>
    <property type="match status" value="1"/>
</dbReference>
<dbReference type="PANTHER" id="PTHR13691:SF5">
    <property type="entry name" value="LARGE RIBOSOMAL SUBUNIT PROTEIN UL2M"/>
    <property type="match status" value="1"/>
</dbReference>
<dbReference type="PANTHER" id="PTHR13691">
    <property type="entry name" value="RIBOSOMAL PROTEIN L2"/>
    <property type="match status" value="1"/>
</dbReference>
<dbReference type="Pfam" id="PF00181">
    <property type="entry name" value="Ribosomal_L2"/>
    <property type="match status" value="1"/>
</dbReference>
<dbReference type="Pfam" id="PF03947">
    <property type="entry name" value="Ribosomal_L2_C"/>
    <property type="match status" value="1"/>
</dbReference>
<dbReference type="PIRSF" id="PIRSF002158">
    <property type="entry name" value="Ribosomal_L2"/>
    <property type="match status" value="1"/>
</dbReference>
<dbReference type="SMART" id="SM01383">
    <property type="entry name" value="Ribosomal_L2"/>
    <property type="match status" value="1"/>
</dbReference>
<dbReference type="SMART" id="SM01382">
    <property type="entry name" value="Ribosomal_L2_C"/>
    <property type="match status" value="1"/>
</dbReference>
<dbReference type="SUPFAM" id="SSF50249">
    <property type="entry name" value="Nucleic acid-binding proteins"/>
    <property type="match status" value="1"/>
</dbReference>
<dbReference type="SUPFAM" id="SSF50104">
    <property type="entry name" value="Translation proteins SH3-like domain"/>
    <property type="match status" value="1"/>
</dbReference>
<dbReference type="PROSITE" id="PS00467">
    <property type="entry name" value="RIBOSOMAL_L2"/>
    <property type="match status" value="1"/>
</dbReference>
<name>RL2_DINSH</name>